<reference key="1">
    <citation type="journal article" date="2010" name="J. Proteome Res.">
        <title>Molecular diversification of peptide toxins from the tarantula Haplopelma hainanum (Ornithoctonus hainana) venom based on transcriptomic, peptidomic, and genomic analyses.</title>
        <authorList>
            <person name="Tang X."/>
            <person name="Zhang Y."/>
            <person name="Hu W."/>
            <person name="Xu D."/>
            <person name="Tao H."/>
            <person name="Yang X."/>
            <person name="Li Y."/>
            <person name="Jiang L."/>
            <person name="Liang S."/>
        </authorList>
    </citation>
    <scope>NUCLEOTIDE SEQUENCE [LARGE SCALE MRNA]</scope>
    <source>
        <tissue>Venom gland</tissue>
    </source>
</reference>
<comment type="function">
    <text evidence="1">Probable ion channel inhibitor.</text>
</comment>
<comment type="subcellular location">
    <subcellularLocation>
        <location evidence="1">Secreted</location>
    </subcellularLocation>
</comment>
<comment type="tissue specificity">
    <text>Expressed by the venom gland.</text>
</comment>
<comment type="domain">
    <text evidence="1">The presence of a 'disulfide through disulfide knot' structurally defines this protein as a knottin.</text>
</comment>
<comment type="similarity">
    <text evidence="3">Belongs to the neurotoxin 14 (magi-1) family. 01 (HNTX-16) subfamily.</text>
</comment>
<protein>
    <recommendedName>
        <fullName>U11-theraphotoxin-Hhn1d</fullName>
        <shortName>U11-TRTX-Hhn1d</shortName>
    </recommendedName>
    <alternativeName>
        <fullName>Hainantoxin-XVI-4</fullName>
        <shortName>HNTX-XVI-4</shortName>
    </alternativeName>
</protein>
<keyword id="KW-1015">Disulfide bond</keyword>
<keyword id="KW-0872">Ion channel impairing toxin</keyword>
<keyword id="KW-0960">Knottin</keyword>
<keyword id="KW-0964">Secreted</keyword>
<keyword id="KW-0732">Signal</keyword>
<keyword id="KW-0800">Toxin</keyword>
<name>H16D1_CYRHA</name>
<feature type="signal peptide" evidence="2">
    <location>
        <begin position="1"/>
        <end position="21"/>
    </location>
</feature>
<feature type="propeptide" id="PRO_0000400921" evidence="1">
    <location>
        <begin position="22"/>
        <end position="74"/>
    </location>
</feature>
<feature type="peptide" id="PRO_0000400922" description="U11-theraphotoxin-Hhn1d">
    <location>
        <begin position="75"/>
        <end position="113"/>
    </location>
</feature>
<feature type="disulfide bond" evidence="1">
    <location>
        <begin position="75"/>
        <end position="90"/>
    </location>
</feature>
<feature type="disulfide bond" evidence="1">
    <location>
        <begin position="82"/>
        <end position="95"/>
    </location>
</feature>
<feature type="disulfide bond" evidence="1">
    <location>
        <begin position="89"/>
        <end position="110"/>
    </location>
</feature>
<proteinExistence type="evidence at transcript level"/>
<evidence type="ECO:0000250" key="1"/>
<evidence type="ECO:0000255" key="2"/>
<evidence type="ECO:0000305" key="3"/>
<dbReference type="EMBL" id="GU292950">
    <property type="protein sequence ID" value="ADB56766.1"/>
    <property type="molecule type" value="mRNA"/>
</dbReference>
<dbReference type="SMR" id="D2Y273"/>
<dbReference type="ArachnoServer" id="AS001904">
    <property type="toxin name" value="U11-theraphotoxin-Hhn1d"/>
</dbReference>
<dbReference type="GO" id="GO:0005576">
    <property type="term" value="C:extracellular region"/>
    <property type="evidence" value="ECO:0007669"/>
    <property type="project" value="UniProtKB-SubCell"/>
</dbReference>
<dbReference type="GO" id="GO:0019871">
    <property type="term" value="F:sodium channel inhibitor activity"/>
    <property type="evidence" value="ECO:0007669"/>
    <property type="project" value="InterPro"/>
</dbReference>
<dbReference type="GO" id="GO:0090729">
    <property type="term" value="F:toxin activity"/>
    <property type="evidence" value="ECO:0007669"/>
    <property type="project" value="UniProtKB-KW"/>
</dbReference>
<dbReference type="InterPro" id="IPR012627">
    <property type="entry name" value="Toxin_22"/>
</dbReference>
<dbReference type="Pfam" id="PF08092">
    <property type="entry name" value="Toxin_22"/>
    <property type="match status" value="1"/>
</dbReference>
<organism>
    <name type="scientific">Cyriopagopus hainanus</name>
    <name type="common">Chinese bird spider</name>
    <name type="synonym">Haplopelma hainanum</name>
    <dbReference type="NCBI Taxonomy" id="209901"/>
    <lineage>
        <taxon>Eukaryota</taxon>
        <taxon>Metazoa</taxon>
        <taxon>Ecdysozoa</taxon>
        <taxon>Arthropoda</taxon>
        <taxon>Chelicerata</taxon>
        <taxon>Arachnida</taxon>
        <taxon>Araneae</taxon>
        <taxon>Mygalomorphae</taxon>
        <taxon>Theraphosidae</taxon>
        <taxon>Haplopelma</taxon>
    </lineage>
</organism>
<accession>D2Y273</accession>
<sequence length="113" mass="13101">MNTVRVTFLLVFVVAVSLGQADKDENRMEMKDKTEQGKSYLHFAENLLLQKLEDVEAKLLEKDSEKSINSRQKRCIEEGVPCDENDPRCCSGLVCLKPTLRGIWYKSYYCYKK</sequence>